<gene>
    <name evidence="1" type="primary">glgB</name>
    <name type="ordered locus">CTLon_0241</name>
</gene>
<reference key="1">
    <citation type="journal article" date="2008" name="Genome Res.">
        <title>Chlamydia trachomatis: genome sequence analysis of lymphogranuloma venereum isolates.</title>
        <authorList>
            <person name="Thomson N.R."/>
            <person name="Holden M.T.G."/>
            <person name="Carder C."/>
            <person name="Lennard N."/>
            <person name="Lockey S.J."/>
            <person name="Marsh P."/>
            <person name="Skipp P."/>
            <person name="O'Connor C.D."/>
            <person name="Goodhead I."/>
            <person name="Norbertzcak H."/>
            <person name="Harris B."/>
            <person name="Ormond D."/>
            <person name="Rance R."/>
            <person name="Quail M.A."/>
            <person name="Parkhill J."/>
            <person name="Stephens R.S."/>
            <person name="Clarke I.N."/>
        </authorList>
    </citation>
    <scope>NUCLEOTIDE SEQUENCE [LARGE SCALE GENOMIC DNA]</scope>
    <source>
        <strain>UCH-1/proctitis</strain>
    </source>
</reference>
<sequence length="738" mass="84578">MDPFFLNTQHVELLVSGKQSSPQDLLGIVSESLNQDRIVLFRPGAETVFVELRGKIQQAESHHSGIFSLPVMKGISPQDYRVYHQNGLLAHDPYAFPLLWGEIDSFLFHEGTHQRIYERMGAIPCEIDGVPGVRFIVWAPHAQRVSVIGDFNGWHGLVNPLHKVSDQGVWELFVPGLTAGACYKWEMVTESGQVLIKSDPYGKFFGPPPRSVSVVIDDSYEWNDSEWLEERIKKTEGPMNIYEVHVGSWQWQEGQPLNYKELADQLALYCKQMHYTHVELLPVTEHPLNESWGYQTTGYYAPTSRYGSFEDLQYFIDTMHQHGIGVILDWVPGHFPIDSFAMSGFDGTPLYEYTRNPSPLHPHWHTYTFDYAKPEVCNFLLGSALFWIDKMHVDGIRVDAVSSMLYLDYGRYAGEWVPNRYGGRENLDAIRFLQQFNTVIHEKYPGVLTFAEESTTFPKITVSVEEGGLGFDYKWNMGWMHDTLHYFEKDFPYRPYHQSDLTFPQWYAFSERFLLPFSHDEVVHGKRSLIGKMPGDAWRQFAQLRLLLGYQICQPGKKLLFMGGEFGQGREWSPGRELDWELLDISYHQGVHLCSQELNALYVQSPQLWQADHLPSSFRWVDFSDVRNGVVAYLRFADADAKKALLCVHHFGVGYFPHYLLPILPLESCDLLMNTDDTRFGGSGKGFREPEILTPEIARQEREAAGLIEADDESGPDCWGLDIELPPSATLIFSVTLQ</sequence>
<evidence type="ECO:0000255" key="1">
    <source>
        <dbReference type="HAMAP-Rule" id="MF_00685"/>
    </source>
</evidence>
<organism>
    <name type="scientific">Chlamydia trachomatis serovar L2b (strain UCH-1/proctitis)</name>
    <dbReference type="NCBI Taxonomy" id="471473"/>
    <lineage>
        <taxon>Bacteria</taxon>
        <taxon>Pseudomonadati</taxon>
        <taxon>Chlamydiota</taxon>
        <taxon>Chlamydiia</taxon>
        <taxon>Chlamydiales</taxon>
        <taxon>Chlamydiaceae</taxon>
        <taxon>Chlamydia/Chlamydophila group</taxon>
        <taxon>Chlamydia</taxon>
    </lineage>
</organism>
<keyword id="KW-0119">Carbohydrate metabolism</keyword>
<keyword id="KW-0320">Glycogen biosynthesis</keyword>
<keyword id="KW-0321">Glycogen metabolism</keyword>
<keyword id="KW-0328">Glycosyltransferase</keyword>
<keyword id="KW-0808">Transferase</keyword>
<protein>
    <recommendedName>
        <fullName evidence="1">1,4-alpha-glucan branching enzyme GlgB</fullName>
        <ecNumber evidence="1">2.4.1.18</ecNumber>
    </recommendedName>
    <alternativeName>
        <fullName evidence="1">1,4-alpha-D-glucan:1,4-alpha-D-glucan 6-glucosyl-transferase</fullName>
    </alternativeName>
    <alternativeName>
        <fullName evidence="1">Alpha-(1-&gt;4)-glucan branching enzyme</fullName>
    </alternativeName>
    <alternativeName>
        <fullName evidence="1">Glycogen branching enzyme</fullName>
        <shortName evidence="1">BE</shortName>
    </alternativeName>
</protein>
<comment type="function">
    <text evidence="1">Catalyzes the formation of the alpha-1,6-glucosidic linkages in glycogen by scission of a 1,4-alpha-linked oligosaccharide from growing alpha-1,4-glucan chains and the subsequent attachment of the oligosaccharide to the alpha-1,6 position.</text>
</comment>
<comment type="catalytic activity">
    <reaction evidence="1">
        <text>Transfers a segment of a (1-&gt;4)-alpha-D-glucan chain to a primary hydroxy group in a similar glucan chain.</text>
        <dbReference type="EC" id="2.4.1.18"/>
    </reaction>
</comment>
<comment type="pathway">
    <text evidence="1">Glycan biosynthesis; glycogen biosynthesis.</text>
</comment>
<comment type="subunit">
    <text evidence="1">Monomer.</text>
</comment>
<comment type="similarity">
    <text evidence="1">Belongs to the glycosyl hydrolase 13 family. GlgB subfamily.</text>
</comment>
<accession>B0BAX7</accession>
<dbReference type="EC" id="2.4.1.18" evidence="1"/>
<dbReference type="EMBL" id="AM884177">
    <property type="protein sequence ID" value="CAP06639.1"/>
    <property type="molecule type" value="Genomic_DNA"/>
</dbReference>
<dbReference type="RefSeq" id="WP_012263574.1">
    <property type="nucleotide sequence ID" value="NC_010280.2"/>
</dbReference>
<dbReference type="SMR" id="B0BAX7"/>
<dbReference type="CAZy" id="CBM48">
    <property type="family name" value="Carbohydrate-Binding Module Family 48"/>
</dbReference>
<dbReference type="CAZy" id="GH13">
    <property type="family name" value="Glycoside Hydrolase Family 13"/>
</dbReference>
<dbReference type="KEGG" id="ctl:CTLon_0241"/>
<dbReference type="HOGENOM" id="CLU_004245_3_2_0"/>
<dbReference type="UniPathway" id="UPA00164"/>
<dbReference type="Proteomes" id="UP001154401">
    <property type="component" value="Chromosome"/>
</dbReference>
<dbReference type="GO" id="GO:0005829">
    <property type="term" value="C:cytosol"/>
    <property type="evidence" value="ECO:0007669"/>
    <property type="project" value="TreeGrafter"/>
</dbReference>
<dbReference type="GO" id="GO:0003844">
    <property type="term" value="F:1,4-alpha-glucan branching enzyme activity"/>
    <property type="evidence" value="ECO:0007669"/>
    <property type="project" value="UniProtKB-UniRule"/>
</dbReference>
<dbReference type="GO" id="GO:0043169">
    <property type="term" value="F:cation binding"/>
    <property type="evidence" value="ECO:0007669"/>
    <property type="project" value="InterPro"/>
</dbReference>
<dbReference type="GO" id="GO:0004553">
    <property type="term" value="F:hydrolase activity, hydrolyzing O-glycosyl compounds"/>
    <property type="evidence" value="ECO:0007669"/>
    <property type="project" value="InterPro"/>
</dbReference>
<dbReference type="GO" id="GO:0005978">
    <property type="term" value="P:glycogen biosynthetic process"/>
    <property type="evidence" value="ECO:0007669"/>
    <property type="project" value="UniProtKB-UniRule"/>
</dbReference>
<dbReference type="CDD" id="cd11322">
    <property type="entry name" value="AmyAc_Glg_BE"/>
    <property type="match status" value="1"/>
</dbReference>
<dbReference type="CDD" id="cd02855">
    <property type="entry name" value="E_set_GBE_prok_N"/>
    <property type="match status" value="1"/>
</dbReference>
<dbReference type="FunFam" id="2.60.40.10:FF:000169">
    <property type="entry name" value="1,4-alpha-glucan branching enzyme GlgB"/>
    <property type="match status" value="1"/>
</dbReference>
<dbReference type="FunFam" id="3.20.20.80:FF:000003">
    <property type="entry name" value="1,4-alpha-glucan branching enzyme GlgB"/>
    <property type="match status" value="1"/>
</dbReference>
<dbReference type="Gene3D" id="3.20.20.80">
    <property type="entry name" value="Glycosidases"/>
    <property type="match status" value="1"/>
</dbReference>
<dbReference type="Gene3D" id="2.60.40.1180">
    <property type="entry name" value="Golgi alpha-mannosidase II"/>
    <property type="match status" value="1"/>
</dbReference>
<dbReference type="Gene3D" id="2.60.40.10">
    <property type="entry name" value="Immunoglobulins"/>
    <property type="match status" value="1"/>
</dbReference>
<dbReference type="HAMAP" id="MF_00685">
    <property type="entry name" value="GlgB"/>
    <property type="match status" value="1"/>
</dbReference>
<dbReference type="InterPro" id="IPR006048">
    <property type="entry name" value="A-amylase/branching_C"/>
</dbReference>
<dbReference type="InterPro" id="IPR037439">
    <property type="entry name" value="Branching_enzy"/>
</dbReference>
<dbReference type="InterPro" id="IPR006407">
    <property type="entry name" value="GlgB"/>
</dbReference>
<dbReference type="InterPro" id="IPR044143">
    <property type="entry name" value="GlgB_N_E_set_prok"/>
</dbReference>
<dbReference type="InterPro" id="IPR006047">
    <property type="entry name" value="Glyco_hydro_13_cat_dom"/>
</dbReference>
<dbReference type="InterPro" id="IPR004193">
    <property type="entry name" value="Glyco_hydro_13_N"/>
</dbReference>
<dbReference type="InterPro" id="IPR013780">
    <property type="entry name" value="Glyco_hydro_b"/>
</dbReference>
<dbReference type="InterPro" id="IPR017853">
    <property type="entry name" value="Glycoside_hydrolase_SF"/>
</dbReference>
<dbReference type="InterPro" id="IPR013783">
    <property type="entry name" value="Ig-like_fold"/>
</dbReference>
<dbReference type="InterPro" id="IPR014756">
    <property type="entry name" value="Ig_E-set"/>
</dbReference>
<dbReference type="NCBIfam" id="TIGR01515">
    <property type="entry name" value="branching_enzym"/>
    <property type="match status" value="1"/>
</dbReference>
<dbReference type="NCBIfam" id="NF003811">
    <property type="entry name" value="PRK05402.1"/>
    <property type="match status" value="1"/>
</dbReference>
<dbReference type="NCBIfam" id="NF008967">
    <property type="entry name" value="PRK12313.1"/>
    <property type="match status" value="1"/>
</dbReference>
<dbReference type="PANTHER" id="PTHR43651">
    <property type="entry name" value="1,4-ALPHA-GLUCAN-BRANCHING ENZYME"/>
    <property type="match status" value="1"/>
</dbReference>
<dbReference type="PANTHER" id="PTHR43651:SF3">
    <property type="entry name" value="1,4-ALPHA-GLUCAN-BRANCHING ENZYME"/>
    <property type="match status" value="1"/>
</dbReference>
<dbReference type="Pfam" id="PF00128">
    <property type="entry name" value="Alpha-amylase"/>
    <property type="match status" value="2"/>
</dbReference>
<dbReference type="Pfam" id="PF02806">
    <property type="entry name" value="Alpha-amylase_C"/>
    <property type="match status" value="1"/>
</dbReference>
<dbReference type="Pfam" id="PF02922">
    <property type="entry name" value="CBM_48"/>
    <property type="match status" value="1"/>
</dbReference>
<dbReference type="PIRSF" id="PIRSF000463">
    <property type="entry name" value="GlgB"/>
    <property type="match status" value="1"/>
</dbReference>
<dbReference type="SMART" id="SM00642">
    <property type="entry name" value="Aamy"/>
    <property type="match status" value="1"/>
</dbReference>
<dbReference type="SUPFAM" id="SSF51445">
    <property type="entry name" value="(Trans)glycosidases"/>
    <property type="match status" value="1"/>
</dbReference>
<dbReference type="SUPFAM" id="SSF81296">
    <property type="entry name" value="E set domains"/>
    <property type="match status" value="2"/>
</dbReference>
<dbReference type="SUPFAM" id="SSF51011">
    <property type="entry name" value="Glycosyl hydrolase domain"/>
    <property type="match status" value="1"/>
</dbReference>
<proteinExistence type="inferred from homology"/>
<feature type="chain" id="PRO_1000131814" description="1,4-alpha-glucan branching enzyme GlgB">
    <location>
        <begin position="1"/>
        <end position="738"/>
    </location>
</feature>
<feature type="active site" description="Nucleophile" evidence="1">
    <location>
        <position position="399"/>
    </location>
</feature>
<feature type="active site" description="Proton donor" evidence="1">
    <location>
        <position position="452"/>
    </location>
</feature>
<name>GLGB_CHLTB</name>